<proteinExistence type="inferred from homology"/>
<gene>
    <name evidence="1" type="primary">FEN1</name>
    <name type="ordered locus">TP02_0912</name>
</gene>
<protein>
    <recommendedName>
        <fullName evidence="1">Flap endonuclease 1</fullName>
        <shortName evidence="1">FEN-1</shortName>
        <ecNumber evidence="1">3.1.-.-</ecNumber>
    </recommendedName>
    <alternativeName>
        <fullName evidence="1">Flap structure-specific endonuclease 1</fullName>
    </alternativeName>
</protein>
<comment type="function">
    <text evidence="1">Structure-specific nuclease with 5'-flap endonuclease and 5'-3' exonuclease activities involved in DNA replication and repair. During DNA replication, cleaves the 5'-overhanging flap structure that is generated by displacement synthesis when DNA polymerase encounters the 5'-end of a downstream Okazaki fragment. It enters the flap from the 5'-end and then tracks to cleave the flap base, leaving a nick for ligation. Also involved in the long patch base excision repair (LP-BER) pathway, by cleaving within the apurinic/apyrimidinic (AP) site-terminated flap. Acts as a genome stabilization factor that prevents flaps from equilibrating into structures that lead to duplications and deletions. Also possesses 5'-3' exonuclease activity on nicked or gapped double-stranded DNA, and exhibits RNase H activity. Also involved in replication and repair of rDNA and in repairing mitochondrial DNA.</text>
</comment>
<comment type="cofactor">
    <cofactor evidence="1">
        <name>Mg(2+)</name>
        <dbReference type="ChEBI" id="CHEBI:18420"/>
    </cofactor>
    <text evidence="1">Binds 2 magnesium ions per subunit. They probably participate in the reaction catalyzed by the enzyme. May bind an additional third magnesium ion after substrate binding.</text>
</comment>
<comment type="subunit">
    <text evidence="1">Interacts with PCNA. Three molecules of FEN1 bind to one PCNA trimer with each molecule binding to one PCNA monomer. PCNA stimulates the nuclease activity without altering cleavage specificity.</text>
</comment>
<comment type="subcellular location">
    <subcellularLocation>
        <location evidence="1">Nucleus</location>
        <location evidence="1">Nucleolus</location>
    </subcellularLocation>
    <subcellularLocation>
        <location evidence="1">Nucleus</location>
        <location evidence="1">Nucleoplasm</location>
    </subcellularLocation>
    <subcellularLocation>
        <location evidence="1">Mitochondrion</location>
    </subcellularLocation>
    <text evidence="1">Resides mostly in the nucleoli and relocalizes to the nucleoplasm upon DNA damage.</text>
</comment>
<comment type="PTM">
    <text evidence="1">Phosphorylated. Phosphorylation upon DNA damage induces relocalization to the nuclear plasma.</text>
</comment>
<comment type="similarity">
    <text evidence="1">Belongs to the XPG/RAD2 endonuclease family. FEN1 subfamily.</text>
</comment>
<dbReference type="EC" id="3.1.-.-" evidence="1"/>
<dbReference type="EMBL" id="AAGK01000002">
    <property type="protein sequence ID" value="EAN33197.1"/>
    <property type="molecule type" value="Genomic_DNA"/>
</dbReference>
<dbReference type="RefSeq" id="XP_765480.1">
    <property type="nucleotide sequence ID" value="XM_760387.1"/>
</dbReference>
<dbReference type="SMR" id="Q4N3S6"/>
<dbReference type="FunCoup" id="Q4N3S6">
    <property type="interactions" value="442"/>
</dbReference>
<dbReference type="STRING" id="5875.Q4N3S6"/>
<dbReference type="EnsemblProtists" id="EAN33197">
    <property type="protein sequence ID" value="EAN33197"/>
    <property type="gene ID" value="TP02_0912"/>
</dbReference>
<dbReference type="KEGG" id="tpv:TP02_0912"/>
<dbReference type="VEuPathDB" id="PiroplasmaDB:TpMuguga_02g00912"/>
<dbReference type="eggNOG" id="KOG2519">
    <property type="taxonomic scope" value="Eukaryota"/>
</dbReference>
<dbReference type="InParanoid" id="Q4N3S6"/>
<dbReference type="OMA" id="HIYGLMN"/>
<dbReference type="Proteomes" id="UP000001949">
    <property type="component" value="Unassembled WGS sequence"/>
</dbReference>
<dbReference type="GO" id="GO:0005739">
    <property type="term" value="C:mitochondrion"/>
    <property type="evidence" value="ECO:0007669"/>
    <property type="project" value="UniProtKB-SubCell"/>
</dbReference>
<dbReference type="GO" id="GO:0005730">
    <property type="term" value="C:nucleolus"/>
    <property type="evidence" value="ECO:0007669"/>
    <property type="project" value="UniProtKB-SubCell"/>
</dbReference>
<dbReference type="GO" id="GO:0005654">
    <property type="term" value="C:nucleoplasm"/>
    <property type="evidence" value="ECO:0007669"/>
    <property type="project" value="UniProtKB-SubCell"/>
</dbReference>
<dbReference type="GO" id="GO:0008409">
    <property type="term" value="F:5'-3' exonuclease activity"/>
    <property type="evidence" value="ECO:0007669"/>
    <property type="project" value="UniProtKB-UniRule"/>
</dbReference>
<dbReference type="GO" id="GO:0017108">
    <property type="term" value="F:5'-flap endonuclease activity"/>
    <property type="evidence" value="ECO:0007669"/>
    <property type="project" value="UniProtKB-UniRule"/>
</dbReference>
<dbReference type="GO" id="GO:0003677">
    <property type="term" value="F:DNA binding"/>
    <property type="evidence" value="ECO:0007669"/>
    <property type="project" value="UniProtKB-UniRule"/>
</dbReference>
<dbReference type="GO" id="GO:0000287">
    <property type="term" value="F:magnesium ion binding"/>
    <property type="evidence" value="ECO:0007669"/>
    <property type="project" value="UniProtKB-UniRule"/>
</dbReference>
<dbReference type="GO" id="GO:0006284">
    <property type="term" value="P:base-excision repair"/>
    <property type="evidence" value="ECO:0007669"/>
    <property type="project" value="UniProtKB-UniRule"/>
</dbReference>
<dbReference type="GO" id="GO:0043137">
    <property type="term" value="P:DNA replication, removal of RNA primer"/>
    <property type="evidence" value="ECO:0007669"/>
    <property type="project" value="UniProtKB-UniRule"/>
</dbReference>
<dbReference type="CDD" id="cd09907">
    <property type="entry name" value="H3TH_FEN1-Euk"/>
    <property type="match status" value="1"/>
</dbReference>
<dbReference type="CDD" id="cd09867">
    <property type="entry name" value="PIN_FEN1"/>
    <property type="match status" value="1"/>
</dbReference>
<dbReference type="FunFam" id="3.40.50.1010:FF:000016">
    <property type="entry name" value="Flap endonuclease 1"/>
    <property type="match status" value="1"/>
</dbReference>
<dbReference type="Gene3D" id="1.10.150.20">
    <property type="entry name" value="5' to 3' exonuclease, C-terminal subdomain"/>
    <property type="match status" value="1"/>
</dbReference>
<dbReference type="Gene3D" id="3.40.50.1010">
    <property type="entry name" value="5'-nuclease"/>
    <property type="match status" value="1"/>
</dbReference>
<dbReference type="HAMAP" id="MF_00614">
    <property type="entry name" value="Fen"/>
    <property type="match status" value="1"/>
</dbReference>
<dbReference type="InterPro" id="IPR002421">
    <property type="entry name" value="5-3_exonuclease"/>
</dbReference>
<dbReference type="InterPro" id="IPR036279">
    <property type="entry name" value="5-3_exonuclease_C_sf"/>
</dbReference>
<dbReference type="InterPro" id="IPR023426">
    <property type="entry name" value="Flap_endonuc"/>
</dbReference>
<dbReference type="InterPro" id="IPR008918">
    <property type="entry name" value="HhH2"/>
</dbReference>
<dbReference type="InterPro" id="IPR029060">
    <property type="entry name" value="PIN-like_dom_sf"/>
</dbReference>
<dbReference type="InterPro" id="IPR006086">
    <property type="entry name" value="XPG-I_dom"/>
</dbReference>
<dbReference type="InterPro" id="IPR006084">
    <property type="entry name" value="XPG/Rad2"/>
</dbReference>
<dbReference type="InterPro" id="IPR006085">
    <property type="entry name" value="XPG_DNA_repair_N"/>
</dbReference>
<dbReference type="PANTHER" id="PTHR11081:SF9">
    <property type="entry name" value="FLAP ENDONUCLEASE 1"/>
    <property type="match status" value="1"/>
</dbReference>
<dbReference type="PANTHER" id="PTHR11081">
    <property type="entry name" value="FLAP ENDONUCLEASE FAMILY MEMBER"/>
    <property type="match status" value="1"/>
</dbReference>
<dbReference type="Pfam" id="PF00867">
    <property type="entry name" value="XPG_I"/>
    <property type="match status" value="1"/>
</dbReference>
<dbReference type="Pfam" id="PF00752">
    <property type="entry name" value="XPG_N"/>
    <property type="match status" value="1"/>
</dbReference>
<dbReference type="PRINTS" id="PR00853">
    <property type="entry name" value="XPGRADSUPER"/>
</dbReference>
<dbReference type="SMART" id="SM00475">
    <property type="entry name" value="53EXOc"/>
    <property type="match status" value="1"/>
</dbReference>
<dbReference type="SMART" id="SM00279">
    <property type="entry name" value="HhH2"/>
    <property type="match status" value="1"/>
</dbReference>
<dbReference type="SMART" id="SM00484">
    <property type="entry name" value="XPGI"/>
    <property type="match status" value="1"/>
</dbReference>
<dbReference type="SMART" id="SM00485">
    <property type="entry name" value="XPGN"/>
    <property type="match status" value="1"/>
</dbReference>
<dbReference type="SUPFAM" id="SSF47807">
    <property type="entry name" value="5' to 3' exonuclease, C-terminal subdomain"/>
    <property type="match status" value="1"/>
</dbReference>
<dbReference type="SUPFAM" id="SSF88723">
    <property type="entry name" value="PIN domain-like"/>
    <property type="match status" value="1"/>
</dbReference>
<evidence type="ECO:0000255" key="1">
    <source>
        <dbReference type="HAMAP-Rule" id="MF_03140"/>
    </source>
</evidence>
<evidence type="ECO:0000256" key="2">
    <source>
        <dbReference type="SAM" id="MobiDB-lite"/>
    </source>
</evidence>
<organism>
    <name type="scientific">Theileria parva</name>
    <name type="common">East coast fever infection agent</name>
    <dbReference type="NCBI Taxonomy" id="5875"/>
    <lineage>
        <taxon>Eukaryota</taxon>
        <taxon>Sar</taxon>
        <taxon>Alveolata</taxon>
        <taxon>Apicomplexa</taxon>
        <taxon>Aconoidasida</taxon>
        <taxon>Piroplasmida</taxon>
        <taxon>Theileriidae</taxon>
        <taxon>Theileria</taxon>
    </lineage>
</organism>
<keyword id="KW-0227">DNA damage</keyword>
<keyword id="KW-0234">DNA repair</keyword>
<keyword id="KW-0235">DNA replication</keyword>
<keyword id="KW-0255">Endonuclease</keyword>
<keyword id="KW-0269">Exonuclease</keyword>
<keyword id="KW-0378">Hydrolase</keyword>
<keyword id="KW-0460">Magnesium</keyword>
<keyword id="KW-0479">Metal-binding</keyword>
<keyword id="KW-0496">Mitochondrion</keyword>
<keyword id="KW-0540">Nuclease</keyword>
<keyword id="KW-0539">Nucleus</keyword>
<keyword id="KW-0597">Phosphoprotein</keyword>
<keyword id="KW-1185">Reference proteome</keyword>
<reference key="1">
    <citation type="journal article" date="2005" name="Science">
        <title>Genome sequence of Theileria parva, a bovine pathogen that transforms lymphocytes.</title>
        <authorList>
            <person name="Gardner M.J."/>
            <person name="Bishop R."/>
            <person name="Shah T."/>
            <person name="de Villiers E.P."/>
            <person name="Carlton J.M."/>
            <person name="Hall N."/>
            <person name="Ren Q."/>
            <person name="Paulsen I.T."/>
            <person name="Pain A."/>
            <person name="Berriman M."/>
            <person name="Wilson R.J.M."/>
            <person name="Sato S."/>
            <person name="Ralph S.A."/>
            <person name="Mann D.J."/>
            <person name="Xiong Z."/>
            <person name="Shallom S.J."/>
            <person name="Weidman J."/>
            <person name="Jiang L."/>
            <person name="Lynn J."/>
            <person name="Weaver B."/>
            <person name="Shoaibi A."/>
            <person name="Domingo A.R."/>
            <person name="Wasawo D."/>
            <person name="Crabtree J."/>
            <person name="Wortman J.R."/>
            <person name="Haas B."/>
            <person name="Angiuoli S.V."/>
            <person name="Creasy T.H."/>
            <person name="Lu C."/>
            <person name="Suh B."/>
            <person name="Silva J.C."/>
            <person name="Utterback T.R."/>
            <person name="Feldblyum T.V."/>
            <person name="Pertea M."/>
            <person name="Allen J."/>
            <person name="Nierman W.C."/>
            <person name="Taracha E.L.N."/>
            <person name="Salzberg S.L."/>
            <person name="White O.R."/>
            <person name="Fitzhugh H.A."/>
            <person name="Morzaria S."/>
            <person name="Venter J.C."/>
            <person name="Fraser C.M."/>
            <person name="Nene V."/>
        </authorList>
    </citation>
    <scope>NUCLEOTIDE SEQUENCE [LARGE SCALE GENOMIC DNA]</scope>
    <source>
        <strain>Muguga</strain>
    </source>
</reference>
<accession>Q4N3S6</accession>
<feature type="chain" id="PRO_0000403545" description="Flap endonuclease 1">
    <location>
        <begin position="1"/>
        <end position="494"/>
    </location>
</feature>
<feature type="region of interest" description="N-domain">
    <location>
        <begin position="1"/>
        <end position="106"/>
    </location>
</feature>
<feature type="region of interest" description="I-domain">
    <location>
        <begin position="124"/>
        <end position="253"/>
    </location>
</feature>
<feature type="region of interest" description="Interaction with PCNA" evidence="1">
    <location>
        <begin position="330"/>
        <end position="338"/>
    </location>
</feature>
<feature type="region of interest" description="Disordered" evidence="2">
    <location>
        <begin position="341"/>
        <end position="382"/>
    </location>
</feature>
<feature type="region of interest" description="Disordered" evidence="2">
    <location>
        <begin position="395"/>
        <end position="426"/>
    </location>
</feature>
<feature type="compositionally biased region" description="Basic and acidic residues" evidence="2">
    <location>
        <begin position="408"/>
        <end position="426"/>
    </location>
</feature>
<feature type="binding site" evidence="1">
    <location>
        <position position="34"/>
    </location>
    <ligand>
        <name>Mg(2+)</name>
        <dbReference type="ChEBI" id="CHEBI:18420"/>
        <label>1</label>
    </ligand>
</feature>
<feature type="binding site" evidence="1">
    <location>
        <position position="47"/>
    </location>
    <ligand>
        <name>DNA</name>
        <dbReference type="ChEBI" id="CHEBI:16991"/>
    </ligand>
</feature>
<feature type="binding site" evidence="1">
    <location>
        <position position="72"/>
    </location>
    <ligand>
        <name>DNA</name>
        <dbReference type="ChEBI" id="CHEBI:16991"/>
    </ligand>
</feature>
<feature type="binding site" evidence="1">
    <location>
        <position position="88"/>
    </location>
    <ligand>
        <name>Mg(2+)</name>
        <dbReference type="ChEBI" id="CHEBI:18420"/>
        <label>1</label>
    </ligand>
</feature>
<feature type="binding site" evidence="1">
    <location>
        <position position="160"/>
    </location>
    <ligand>
        <name>DNA</name>
        <dbReference type="ChEBI" id="CHEBI:16991"/>
    </ligand>
</feature>
<feature type="binding site" evidence="1">
    <location>
        <position position="160"/>
    </location>
    <ligand>
        <name>Mg(2+)</name>
        <dbReference type="ChEBI" id="CHEBI:18420"/>
        <label>1</label>
    </ligand>
</feature>
<feature type="binding site" evidence="1">
    <location>
        <position position="162"/>
    </location>
    <ligand>
        <name>Mg(2+)</name>
        <dbReference type="ChEBI" id="CHEBI:18420"/>
        <label>1</label>
    </ligand>
</feature>
<feature type="binding site" evidence="1">
    <location>
        <position position="181"/>
    </location>
    <ligand>
        <name>Mg(2+)</name>
        <dbReference type="ChEBI" id="CHEBI:18420"/>
        <label>2</label>
    </ligand>
</feature>
<feature type="binding site" evidence="1">
    <location>
        <position position="183"/>
    </location>
    <ligand>
        <name>Mg(2+)</name>
        <dbReference type="ChEBI" id="CHEBI:18420"/>
        <label>2</label>
    </ligand>
</feature>
<feature type="binding site" evidence="1">
    <location>
        <position position="231"/>
    </location>
    <ligand>
        <name>DNA</name>
        <dbReference type="ChEBI" id="CHEBI:16991"/>
    </ligand>
</feature>
<feature type="binding site" evidence="1">
    <location>
        <position position="233"/>
    </location>
    <ligand>
        <name>DNA</name>
        <dbReference type="ChEBI" id="CHEBI:16991"/>
    </ligand>
</feature>
<feature type="binding site" evidence="1">
    <location>
        <position position="233"/>
    </location>
    <ligand>
        <name>Mg(2+)</name>
        <dbReference type="ChEBI" id="CHEBI:18420"/>
        <label>2</label>
    </ligand>
</feature>
<sequence length="494" mass="55913">MGIKGLIPFLSEKVPSSISELSLESLSGESLAIDASAALYQFTIAIRDSSYFSSLVNSKGESTSHIYGLMNRCSKFLEYGIKPVFVFDSKPPELKTKTLEKRRQQREEANASLKKAISEGDKESVKKLVGRTVKVSKEMNESAKKLLRLMGVPVIEALEEAEAQCAYLVTKNLCRFVASEDTDTLVFGGAFLLRNVASSSSKKILKVDLQKVLDGLEFNFDQFIDFCILCGCDYCDTLEGVGPKTAYSLVKKYQNLEEIVNFKGGDYDDFKEAKEYFLSPKVNEYDENSVKLGTIDPEGLTEFLVQENNFSKERVEKFIEKLLKFKTKKIQTSLLSFLTAPQHNNKAKSSNKRPREPKALDCKPNTYGSGKGTNVVKKESSTIKKDEIDLTAEDLFCEPSNSDNEEDDRGRVDKNEDLFKKSENETNEIKQNQFKSKSDEKKKQEEHHTIEFNFNHRKVILIDDDDDEVVTTANSEKMNCGKCLIYYFLQKLIK</sequence>
<name>FEN1_THEPA</name>